<proteinExistence type="inferred from homology"/>
<organism>
    <name type="scientific">Chlamydomonas reinhardtii</name>
    <name type="common">Chlamydomonas smithii</name>
    <dbReference type="NCBI Taxonomy" id="3055"/>
    <lineage>
        <taxon>Eukaryota</taxon>
        <taxon>Viridiplantae</taxon>
        <taxon>Chlorophyta</taxon>
        <taxon>core chlorophytes</taxon>
        <taxon>Chlorophyceae</taxon>
        <taxon>CS clade</taxon>
        <taxon>Chlamydomonadales</taxon>
        <taxon>Chlamydomonadaceae</taxon>
        <taxon>Chlamydomonas</taxon>
    </lineage>
</organism>
<comment type="function">
    <text evidence="1">Required for the assembly and/or stability of the 40S ribosomal subunit. Required for the processing of the 20S rRNA-precursor to mature 18S rRNA in a late step of the maturation of 40S ribosomal subunits.</text>
</comment>
<comment type="subunit">
    <text evidence="1">Component of the small ribosomal subunit. Mature ribosomes consist of a small (40S) and a large (60S) subunit. The 40S subunit contains about 33 different proteins and 1 molecule of RNA (18S). The 60S subunit contains about 49 different proteins and 3 molecules of RNA (25S, 5.8S and 5S). Interacts with ribosomal protein S21.</text>
</comment>
<comment type="subcellular location">
    <subcellularLocation>
        <location evidence="1">Cytoplasm</location>
    </subcellularLocation>
</comment>
<comment type="similarity">
    <text evidence="1">Belongs to the universal ribosomal protein uS2 family.</text>
</comment>
<name>RSSA_CHLRE</name>
<gene>
    <name type="ORF">CHLREDRAFT_126059</name>
</gene>
<accession>A8IB25</accession>
<sequence>MALSQKEQDIQMMLAAQCHLGTKNCHYQMERYMYRRRQDGIYIINLEKTYEKLQMAARIIVAIENPQDICVLSARPYGQRAVFKFAQYLGCKSMAGRHTPGTFTNQIQKAFEEPRLLILTDPRTDHQPVKESSYMNIPTIAFCDTDSPLTHVDVAIPANNKGKHSIGVLYFLLARMVLEMRDQINVTNPWSVPVDLFFYREPEEAKEAGEEETFEAEGYALPAPVGAAENWGEAAAPAPEAAGYDGAAAAGGFEAAAGFEAAAPPVAGYVAPEAFGGAF</sequence>
<keyword id="KW-0963">Cytoplasm</keyword>
<keyword id="KW-0687">Ribonucleoprotein</keyword>
<keyword id="KW-0689">Ribosomal protein</keyword>
<evidence type="ECO:0000255" key="1">
    <source>
        <dbReference type="HAMAP-Rule" id="MF_03015"/>
    </source>
</evidence>
<evidence type="ECO:0000305" key="2"/>
<dbReference type="EMBL" id="DS496115">
    <property type="protein sequence ID" value="EDP06264.1"/>
    <property type="molecule type" value="Genomic_DNA"/>
</dbReference>
<dbReference type="RefSeq" id="XP_001702485.1">
    <property type="nucleotide sequence ID" value="XM_001702433.1"/>
</dbReference>
<dbReference type="SMR" id="A8IB25"/>
<dbReference type="PaxDb" id="3055-EDP06264"/>
<dbReference type="ProMEX" id="A8IB25"/>
<dbReference type="EnsemblPlants" id="PNW77351">
    <property type="protein sequence ID" value="PNW77351"/>
    <property type="gene ID" value="CHLRE_10g432800v5"/>
</dbReference>
<dbReference type="GeneID" id="5728044"/>
<dbReference type="Gramene" id="PNW77351">
    <property type="protein sequence ID" value="PNW77351"/>
    <property type="gene ID" value="CHLRE_10g432800v5"/>
</dbReference>
<dbReference type="KEGG" id="cre:CHLRE_10g432800v5"/>
<dbReference type="eggNOG" id="KOG0830">
    <property type="taxonomic scope" value="Eukaryota"/>
</dbReference>
<dbReference type="HOGENOM" id="CLU_058171_0_1_1"/>
<dbReference type="OMA" id="DSANWNT"/>
<dbReference type="OrthoDB" id="414863at2759"/>
<dbReference type="GO" id="GO:0022627">
    <property type="term" value="C:cytosolic small ribosomal subunit"/>
    <property type="evidence" value="ECO:0007669"/>
    <property type="project" value="UniProtKB-UniRule"/>
</dbReference>
<dbReference type="GO" id="GO:0003735">
    <property type="term" value="F:structural constituent of ribosome"/>
    <property type="evidence" value="ECO:0007669"/>
    <property type="project" value="UniProtKB-UniRule"/>
</dbReference>
<dbReference type="GO" id="GO:0000028">
    <property type="term" value="P:ribosomal small subunit assembly"/>
    <property type="evidence" value="ECO:0007669"/>
    <property type="project" value="UniProtKB-UniRule"/>
</dbReference>
<dbReference type="GO" id="GO:0006412">
    <property type="term" value="P:translation"/>
    <property type="evidence" value="ECO:0007669"/>
    <property type="project" value="UniProtKB-UniRule"/>
</dbReference>
<dbReference type="CDD" id="cd01425">
    <property type="entry name" value="RPS2"/>
    <property type="match status" value="1"/>
</dbReference>
<dbReference type="FunFam" id="3.40.50.10490:FF:000017">
    <property type="entry name" value="40S ribosomal protein SA"/>
    <property type="match status" value="1"/>
</dbReference>
<dbReference type="Gene3D" id="3.40.50.10490">
    <property type="entry name" value="Glucose-6-phosphate isomerase like protein, domain 1"/>
    <property type="match status" value="1"/>
</dbReference>
<dbReference type="HAMAP" id="MF_03015">
    <property type="entry name" value="Ribosomal_S2_euk"/>
    <property type="match status" value="1"/>
</dbReference>
<dbReference type="InterPro" id="IPR001865">
    <property type="entry name" value="Ribosomal_uS2"/>
</dbReference>
<dbReference type="InterPro" id="IPR018130">
    <property type="entry name" value="Ribosomal_uS2_CS"/>
</dbReference>
<dbReference type="InterPro" id="IPR027498">
    <property type="entry name" value="Ribosomal_uS2_euk"/>
</dbReference>
<dbReference type="InterPro" id="IPR005707">
    <property type="entry name" value="Ribosomal_uS2_euk/arc"/>
</dbReference>
<dbReference type="InterPro" id="IPR023591">
    <property type="entry name" value="Ribosomal_uS2_flav_dom_sf"/>
</dbReference>
<dbReference type="NCBIfam" id="TIGR01012">
    <property type="entry name" value="uS2_euk_arch"/>
    <property type="match status" value="1"/>
</dbReference>
<dbReference type="PANTHER" id="PTHR11489">
    <property type="entry name" value="40S RIBOSOMAL PROTEIN SA"/>
    <property type="match status" value="1"/>
</dbReference>
<dbReference type="Pfam" id="PF00318">
    <property type="entry name" value="Ribosomal_S2"/>
    <property type="match status" value="1"/>
</dbReference>
<dbReference type="PRINTS" id="PR00395">
    <property type="entry name" value="RIBOSOMALS2"/>
</dbReference>
<dbReference type="SUPFAM" id="SSF52313">
    <property type="entry name" value="Ribosomal protein S2"/>
    <property type="match status" value="1"/>
</dbReference>
<dbReference type="PROSITE" id="PS00963">
    <property type="entry name" value="RIBOSOMAL_S2_2"/>
    <property type="match status" value="1"/>
</dbReference>
<feature type="chain" id="PRO_0000371600" description="Small ribosomal subunit protein uS2">
    <location>
        <begin position="1"/>
        <end position="279"/>
    </location>
</feature>
<protein>
    <recommendedName>
        <fullName evidence="1">Small ribosomal subunit protein uS2</fullName>
    </recommendedName>
    <alternativeName>
        <fullName evidence="2">40S ribosomal protein SA</fullName>
    </alternativeName>
</protein>
<reference key="1">
    <citation type="journal article" date="2007" name="Science">
        <title>The Chlamydomonas genome reveals the evolution of key animal and plant functions.</title>
        <authorList>
            <person name="Merchant S.S."/>
            <person name="Prochnik S.E."/>
            <person name="Vallon O."/>
            <person name="Harris E.H."/>
            <person name="Karpowicz S.J."/>
            <person name="Witman G.B."/>
            <person name="Terry A."/>
            <person name="Salamov A."/>
            <person name="Fritz-Laylin L.K."/>
            <person name="Marechal-Drouard L."/>
            <person name="Marshall W.F."/>
            <person name="Qu L.H."/>
            <person name="Nelson D.R."/>
            <person name="Sanderfoot A.A."/>
            <person name="Spalding M.H."/>
            <person name="Kapitonov V.V."/>
            <person name="Ren Q."/>
            <person name="Ferris P."/>
            <person name="Lindquist E."/>
            <person name="Shapiro H."/>
            <person name="Lucas S.M."/>
            <person name="Grimwood J."/>
            <person name="Schmutz J."/>
            <person name="Cardol P."/>
            <person name="Cerutti H."/>
            <person name="Chanfreau G."/>
            <person name="Chen C.L."/>
            <person name="Cognat V."/>
            <person name="Croft M.T."/>
            <person name="Dent R."/>
            <person name="Dutcher S."/>
            <person name="Fernandez E."/>
            <person name="Fukuzawa H."/>
            <person name="Gonzalez-Ballester D."/>
            <person name="Gonzalez-Halphen D."/>
            <person name="Hallmann A."/>
            <person name="Hanikenne M."/>
            <person name="Hippler M."/>
            <person name="Inwood W."/>
            <person name="Jabbari K."/>
            <person name="Kalanon M."/>
            <person name="Kuras R."/>
            <person name="Lefebvre P.A."/>
            <person name="Lemaire S.D."/>
            <person name="Lobanov A.V."/>
            <person name="Lohr M."/>
            <person name="Manuell A."/>
            <person name="Meier I."/>
            <person name="Mets L."/>
            <person name="Mittag M."/>
            <person name="Mittelmeier T."/>
            <person name="Moroney J.V."/>
            <person name="Moseley J."/>
            <person name="Napoli C."/>
            <person name="Nedelcu A.M."/>
            <person name="Niyogi K."/>
            <person name="Novoselov S.V."/>
            <person name="Paulsen I.T."/>
            <person name="Pazour G.J."/>
            <person name="Purton S."/>
            <person name="Ral J.P."/>
            <person name="Riano-Pachon D.M."/>
            <person name="Riekhof W."/>
            <person name="Rymarquis L."/>
            <person name="Schroda M."/>
            <person name="Stern D."/>
            <person name="Umen J."/>
            <person name="Willows R."/>
            <person name="Wilson N."/>
            <person name="Zimmer S.L."/>
            <person name="Allmer J."/>
            <person name="Balk J."/>
            <person name="Bisova K."/>
            <person name="Chen C.J."/>
            <person name="Elias M."/>
            <person name="Gendler K."/>
            <person name="Hauser C."/>
            <person name="Lamb M.R."/>
            <person name="Ledford H."/>
            <person name="Long J.C."/>
            <person name="Minagawa J."/>
            <person name="Page M.D."/>
            <person name="Pan J."/>
            <person name="Pootakham W."/>
            <person name="Roje S."/>
            <person name="Rose A."/>
            <person name="Stahlberg E."/>
            <person name="Terauchi A.M."/>
            <person name="Yang P."/>
            <person name="Ball S."/>
            <person name="Bowler C."/>
            <person name="Dieckmann C.L."/>
            <person name="Gladyshev V.N."/>
            <person name="Green P."/>
            <person name="Jorgensen R."/>
            <person name="Mayfield S."/>
            <person name="Mueller-Roeber B."/>
            <person name="Rajamani S."/>
            <person name="Sayre R.T."/>
            <person name="Brokstein P."/>
            <person name="Dubchak I."/>
            <person name="Goodstein D."/>
            <person name="Hornick L."/>
            <person name="Huang Y.W."/>
            <person name="Jhaveri J."/>
            <person name="Luo Y."/>
            <person name="Martinez D."/>
            <person name="Ngau W.C."/>
            <person name="Otillar B."/>
            <person name="Poliakov A."/>
            <person name="Porter A."/>
            <person name="Szajkowski L."/>
            <person name="Werner G."/>
            <person name="Zhou K."/>
            <person name="Grigoriev I.V."/>
            <person name="Rokhsar D.S."/>
            <person name="Grossman A.R."/>
        </authorList>
    </citation>
    <scope>NUCLEOTIDE SEQUENCE [LARGE SCALE GENOMIC DNA]</scope>
    <source>
        <strain>CC-503</strain>
        <strain>cw92</strain>
    </source>
</reference>